<accession>M1VNH2</accession>
<name>TERQ_TOLAL</name>
<evidence type="ECO:0000250" key="1">
    <source>
        <dbReference type="UniProtKB" id="P04798"/>
    </source>
</evidence>
<evidence type="ECO:0000255" key="2"/>
<evidence type="ECO:0000256" key="3">
    <source>
        <dbReference type="SAM" id="MobiDB-lite"/>
    </source>
</evidence>
<evidence type="ECO:0000269" key="4">
    <source>
    </source>
</evidence>
<evidence type="ECO:0000303" key="5">
    <source>
    </source>
</evidence>
<evidence type="ECO:0000305" key="6"/>
<evidence type="ECO:0000305" key="7">
    <source>
    </source>
</evidence>
<proteinExistence type="evidence at protein level"/>
<feature type="chain" id="PRO_0000460267" description="Cytochrome P450 monooxygeanse terQ">
    <location>
        <begin position="1"/>
        <end position="555"/>
    </location>
</feature>
<feature type="transmembrane region" description="Helical" evidence="2">
    <location>
        <begin position="10"/>
        <end position="30"/>
    </location>
</feature>
<feature type="region of interest" description="Disordered" evidence="3">
    <location>
        <begin position="535"/>
        <end position="555"/>
    </location>
</feature>
<feature type="binding site" description="axial binding residue" evidence="1">
    <location>
        <position position="479"/>
    </location>
    <ligand>
        <name>heme</name>
        <dbReference type="ChEBI" id="CHEBI:30413"/>
    </ligand>
    <ligandPart>
        <name>Fe</name>
        <dbReference type="ChEBI" id="CHEBI:18248"/>
    </ligandPart>
</feature>
<protein>
    <recommendedName>
        <fullName evidence="5">Cytochrome P450 monooxygeanse terQ</fullName>
        <ecNumber evidence="4">1.-.-.-</ecNumber>
    </recommendedName>
    <alternativeName>
        <fullName evidence="5">Terpendoles biosynthesis cluster protein Q</fullName>
    </alternativeName>
</protein>
<organism>
    <name type="scientific">Tolypocladium album</name>
    <name type="common">Soil fungus</name>
    <name type="synonym">Chaunopycnis alba</name>
    <dbReference type="NCBI Taxonomy" id="124418"/>
    <lineage>
        <taxon>Eukaryota</taxon>
        <taxon>Fungi</taxon>
        <taxon>Dikarya</taxon>
        <taxon>Ascomycota</taxon>
        <taxon>Pezizomycotina</taxon>
        <taxon>Sordariomycetes</taxon>
        <taxon>Hypocreomycetidae</taxon>
        <taxon>Hypocreales</taxon>
        <taxon>Ophiocordycipitaceae</taxon>
        <taxon>Tolypocladium</taxon>
    </lineage>
</organism>
<dbReference type="EC" id="1.-.-.-" evidence="4"/>
<dbReference type="EMBL" id="AB725916">
    <property type="protein sequence ID" value="BAM84048.1"/>
    <property type="molecule type" value="Genomic_DNA"/>
</dbReference>
<dbReference type="SMR" id="M1VNH2"/>
<dbReference type="KEGG" id="ag:BAM84048"/>
<dbReference type="BioCyc" id="MetaCyc:MONOMER-18795"/>
<dbReference type="GO" id="GO:0016020">
    <property type="term" value="C:membrane"/>
    <property type="evidence" value="ECO:0007669"/>
    <property type="project" value="UniProtKB-SubCell"/>
</dbReference>
<dbReference type="GO" id="GO:0020037">
    <property type="term" value="F:heme binding"/>
    <property type="evidence" value="ECO:0007669"/>
    <property type="project" value="InterPro"/>
</dbReference>
<dbReference type="GO" id="GO:0005506">
    <property type="term" value="F:iron ion binding"/>
    <property type="evidence" value="ECO:0007669"/>
    <property type="project" value="InterPro"/>
</dbReference>
<dbReference type="GO" id="GO:0004497">
    <property type="term" value="F:monooxygenase activity"/>
    <property type="evidence" value="ECO:0007669"/>
    <property type="project" value="UniProtKB-KW"/>
</dbReference>
<dbReference type="GO" id="GO:0016705">
    <property type="term" value="F:oxidoreductase activity, acting on paired donors, with incorporation or reduction of molecular oxygen"/>
    <property type="evidence" value="ECO:0007669"/>
    <property type="project" value="InterPro"/>
</dbReference>
<dbReference type="GO" id="GO:0019748">
    <property type="term" value="P:secondary metabolic process"/>
    <property type="evidence" value="ECO:0007669"/>
    <property type="project" value="UniProtKB-ARBA"/>
</dbReference>
<dbReference type="CDD" id="cd11041">
    <property type="entry name" value="CYP503A1-like"/>
    <property type="match status" value="1"/>
</dbReference>
<dbReference type="Gene3D" id="1.10.630.10">
    <property type="entry name" value="Cytochrome P450"/>
    <property type="match status" value="1"/>
</dbReference>
<dbReference type="InterPro" id="IPR001128">
    <property type="entry name" value="Cyt_P450"/>
</dbReference>
<dbReference type="InterPro" id="IPR017972">
    <property type="entry name" value="Cyt_P450_CS"/>
</dbReference>
<dbReference type="InterPro" id="IPR002403">
    <property type="entry name" value="Cyt_P450_E_grp-IV"/>
</dbReference>
<dbReference type="InterPro" id="IPR036396">
    <property type="entry name" value="Cyt_P450_sf"/>
</dbReference>
<dbReference type="PANTHER" id="PTHR46206">
    <property type="entry name" value="CYTOCHROME P450"/>
    <property type="match status" value="1"/>
</dbReference>
<dbReference type="PANTHER" id="PTHR46206:SF5">
    <property type="entry name" value="P450, PUTATIVE (EUROFUNG)-RELATED"/>
    <property type="match status" value="1"/>
</dbReference>
<dbReference type="Pfam" id="PF00067">
    <property type="entry name" value="p450"/>
    <property type="match status" value="1"/>
</dbReference>
<dbReference type="PRINTS" id="PR00465">
    <property type="entry name" value="EP450IV"/>
</dbReference>
<dbReference type="SUPFAM" id="SSF48264">
    <property type="entry name" value="Cytochrome P450"/>
    <property type="match status" value="1"/>
</dbReference>
<dbReference type="PROSITE" id="PS00086">
    <property type="entry name" value="CYTOCHROME_P450"/>
    <property type="match status" value="1"/>
</dbReference>
<sequence length="555" mass="62965">MLIDRLAGAVPAHAWPTITVAGAVMVVVLLMRYLDYDKKVEVPVIGPGGRFTKWLGAIRNVWYAREAIHEVANGQHGKLGFQIPTMTRMDVFICDRALTREYYSLDEDHMSFRAVMSEEFQFKWLLPGQHHDVHRIPNSVIAKALSWQRTRASKADDPFFREFSAEFLYGFQEEMRAFTGCGNKSRLPFFSHAGDHTSGNSGWIAAPCFPLALKVIARLTTKSLFGEPLCRNPKFLDMCCEFGDAVPRDAMILRCFPDFIRPLLARFLAAPRGVKELQTVVLNEITSRRNSREKNPMKDLLDFSINWIDEHSADGWEDWHIADMMTNTVFAALHTSSQLVTHTLFELATRPEYVVPLREEIRQCFALYGNGTKAAIDAMHKMDSFIKETQRCNPLDASALARLVLKPYTFSNGLHVPKGSFIFTPNSPLFEDEQFYEDAKRFDGLRFARMRDDPKRKSDSPMTATSEYSMHFGIGRHACPGRYMVSDEVKLVMVHLLLHYDFAMANFGPRPKNMAFGKFILPDMQAKVWLRKSKDAGNTARVDPGAPDGVASEPS</sequence>
<comment type="function">
    <text evidence="4 7">Cytochrome P450 monooxygeanse; part of the gene cluster that mediates the biosynthesis of terpendoles, indole-diterpene (IDT) mycotoxins including terpendole I, terpendole K, terpendole C, as well as the kinesin Eg5 inhibitor terpendole E (PubMed:23261604). TerQ is a C11-hydroxylating enzyme that converts paspalline into terpendole E (PubMed:23261604). Is also able to hydroxylate 13-desoxyterpendole I at C-13 to produce terpendole I (PubMed:23261604). Terpendoles biosynthesis begins with the synthesis of geranylgeranyl diphosphate (GGPP) by a yet unidentified GGPP synthase. Condensation of indole-3-glycerol phosphate with GGPP by the prenyltransferase terC then forms 3-geranylgeranylindole (3-GGI), followed by epoxidation and cyclization of this intermediate (by the FAD-dependent monooxygeanse terM and the terpene cyclase terB) to form paspaline. The cytochrome monooxygenase terQ then hydroxylates paspalline at C-11 to yield terpendole E. The cytochrome monooxygenase terP converts terpendole E to 13-desoxyterpendole I, and terQ converts 13-desoxyterpendole I into terpendole I. TerF and terK are required for conversion of terpendole I to terpendole C which is further converted to terpendole K (Probable).</text>
</comment>
<comment type="cofactor">
    <cofactor evidence="1">
        <name>heme</name>
        <dbReference type="ChEBI" id="CHEBI:30413"/>
    </cofactor>
</comment>
<comment type="pathway">
    <text evidence="4">Secondary metabolite biosynthesis.</text>
</comment>
<comment type="subcellular location">
    <subcellularLocation>
        <location evidence="2">Membrane</location>
        <topology evidence="2">Single-pass membrane protein</topology>
    </subcellularLocation>
</comment>
<comment type="disruption phenotype">
    <text evidence="4">Impairs the production of terpendole E and leads to the accumulation of paspaline and 13-desoxypaxilline.</text>
</comment>
<comment type="similarity">
    <text evidence="6">Belongs to the cytochrome P450 family.</text>
</comment>
<keyword id="KW-0349">Heme</keyword>
<keyword id="KW-0408">Iron</keyword>
<keyword id="KW-0472">Membrane</keyword>
<keyword id="KW-0479">Metal-binding</keyword>
<keyword id="KW-0503">Monooxygenase</keyword>
<keyword id="KW-0560">Oxidoreductase</keyword>
<keyword id="KW-0812">Transmembrane</keyword>
<keyword id="KW-1133">Transmembrane helix</keyword>
<reference key="1">
    <citation type="journal article" date="2012" name="Chem. Biol.">
        <title>Terpendole E, a kinesin Eg5 inhibitor, is a key biosynthetic intermediate of indole-diterpenes in the producing fungus Chaunopycnis alba.</title>
        <authorList>
            <person name="Motoyama T."/>
            <person name="Hayashi T."/>
            <person name="Hirota H."/>
            <person name="Ueki M."/>
            <person name="Osada H."/>
        </authorList>
    </citation>
    <scope>NUCLEOTIDE SEQUENCE [GENOMIC DNA]</scope>
    <scope>FUNCTION</scope>
    <scope>DISRUPTION PHENOTYPE</scope>
    <scope>CATALYTIC ACTIVITY</scope>
    <scope>PATHWAY</scope>
    <source>
        <strain>RK99-F33</strain>
    </source>
</reference>
<gene>
    <name evidence="5" type="primary">terQ</name>
</gene>